<gene>
    <name type="primary">bioF</name>
    <name type="ordered locus">BCE33L3873</name>
</gene>
<proteinExistence type="inferred from homology"/>
<organism>
    <name type="scientific">Bacillus cereus (strain ZK / E33L)</name>
    <dbReference type="NCBI Taxonomy" id="288681"/>
    <lineage>
        <taxon>Bacteria</taxon>
        <taxon>Bacillati</taxon>
        <taxon>Bacillota</taxon>
        <taxon>Bacilli</taxon>
        <taxon>Bacillales</taxon>
        <taxon>Bacillaceae</taxon>
        <taxon>Bacillus</taxon>
        <taxon>Bacillus cereus group</taxon>
    </lineage>
</organism>
<protein>
    <recommendedName>
        <fullName>Putative 8-amino-7-oxononanoate synthase</fullName>
        <shortName>AONS</shortName>
        <ecNumber>2.3.1.47</ecNumber>
    </recommendedName>
    <alternativeName>
        <fullName>7-keto-8-amino-pelargonic acid synthase</fullName>
        <shortName>7-KAP synthase</shortName>
    </alternativeName>
    <alternativeName>
        <fullName>8-amino-7-ketopelargonate synthase</fullName>
    </alternativeName>
</protein>
<accession>Q635G4</accession>
<name>BIOF_BACCZ</name>
<feature type="chain" id="PRO_0000380915" description="Putative 8-amino-7-oxononanoate synthase">
    <location>
        <begin position="1"/>
        <end position="395"/>
    </location>
</feature>
<feature type="binding site" evidence="1">
    <location>
        <position position="23"/>
    </location>
    <ligand>
        <name>substrate</name>
    </ligand>
</feature>
<feature type="binding site" evidence="1">
    <location>
        <begin position="110"/>
        <end position="111"/>
    </location>
    <ligand>
        <name>pyridoxal 5'-phosphate</name>
        <dbReference type="ChEBI" id="CHEBI:597326"/>
    </ligand>
</feature>
<feature type="binding site" evidence="1">
    <location>
        <position position="135"/>
    </location>
    <ligand>
        <name>substrate</name>
    </ligand>
</feature>
<feature type="binding site" evidence="1">
    <location>
        <position position="182"/>
    </location>
    <ligand>
        <name>pyridoxal 5'-phosphate</name>
        <dbReference type="ChEBI" id="CHEBI:597326"/>
    </ligand>
</feature>
<feature type="binding site" evidence="1">
    <location>
        <begin position="207"/>
        <end position="210"/>
    </location>
    <ligand>
        <name>pyridoxal 5'-phosphate</name>
        <dbReference type="ChEBI" id="CHEBI:597326"/>
    </ligand>
</feature>
<feature type="binding site" evidence="1">
    <location>
        <begin position="239"/>
        <end position="242"/>
    </location>
    <ligand>
        <name>pyridoxal 5'-phosphate</name>
        <dbReference type="ChEBI" id="CHEBI:597326"/>
    </ligand>
</feature>
<feature type="binding site" evidence="1">
    <location>
        <position position="356"/>
    </location>
    <ligand>
        <name>substrate</name>
    </ligand>
</feature>
<feature type="modified residue" description="N6-(pyridoxal phosphate)lysine" evidence="1">
    <location>
        <position position="242"/>
    </location>
</feature>
<reference key="1">
    <citation type="journal article" date="2006" name="J. Bacteriol.">
        <title>Pathogenomic sequence analysis of Bacillus cereus and Bacillus thuringiensis isolates closely related to Bacillus anthracis.</title>
        <authorList>
            <person name="Han C.S."/>
            <person name="Xie G."/>
            <person name="Challacombe J.F."/>
            <person name="Altherr M.R."/>
            <person name="Bhotika S.S."/>
            <person name="Bruce D."/>
            <person name="Campbell C.S."/>
            <person name="Campbell M.L."/>
            <person name="Chen J."/>
            <person name="Chertkov O."/>
            <person name="Cleland C."/>
            <person name="Dimitrijevic M."/>
            <person name="Doggett N.A."/>
            <person name="Fawcett J.J."/>
            <person name="Glavina T."/>
            <person name="Goodwin L.A."/>
            <person name="Hill K.K."/>
            <person name="Hitchcock P."/>
            <person name="Jackson P.J."/>
            <person name="Keim P."/>
            <person name="Kewalramani A.R."/>
            <person name="Longmire J."/>
            <person name="Lucas S."/>
            <person name="Malfatti S."/>
            <person name="McMurry K."/>
            <person name="Meincke L.J."/>
            <person name="Misra M."/>
            <person name="Moseman B.L."/>
            <person name="Mundt M."/>
            <person name="Munk A.C."/>
            <person name="Okinaka R.T."/>
            <person name="Parson-Quintana B."/>
            <person name="Reilly L.P."/>
            <person name="Richardson P."/>
            <person name="Robinson D.L."/>
            <person name="Rubin E."/>
            <person name="Saunders E."/>
            <person name="Tapia R."/>
            <person name="Tesmer J.G."/>
            <person name="Thayer N."/>
            <person name="Thompson L.S."/>
            <person name="Tice H."/>
            <person name="Ticknor L.O."/>
            <person name="Wills P.L."/>
            <person name="Brettin T.S."/>
            <person name="Gilna P."/>
        </authorList>
    </citation>
    <scope>NUCLEOTIDE SEQUENCE [LARGE SCALE GENOMIC DNA]</scope>
    <source>
        <strain>ZK / E33L</strain>
    </source>
</reference>
<comment type="function">
    <text evidence="1">Catalyzes the decarboxylative condensation of pimeloyl-[acyl-carrier protein] and L-alanine to produce 8-amino-7-oxononanoate (AON), [acyl-carrier protein], and carbon dioxide.</text>
</comment>
<comment type="catalytic activity">
    <reaction>
        <text>6-carboxyhexanoyl-[ACP] + L-alanine + H(+) = (8S)-8-amino-7-oxononanoate + holo-[ACP] + CO2</text>
        <dbReference type="Rhea" id="RHEA:42288"/>
        <dbReference type="Rhea" id="RHEA-COMP:9685"/>
        <dbReference type="Rhea" id="RHEA-COMP:9955"/>
        <dbReference type="ChEBI" id="CHEBI:15378"/>
        <dbReference type="ChEBI" id="CHEBI:16526"/>
        <dbReference type="ChEBI" id="CHEBI:57972"/>
        <dbReference type="ChEBI" id="CHEBI:64479"/>
        <dbReference type="ChEBI" id="CHEBI:78846"/>
        <dbReference type="ChEBI" id="CHEBI:149468"/>
        <dbReference type="EC" id="2.3.1.47"/>
    </reaction>
</comment>
<comment type="cofactor">
    <cofactor evidence="1">
        <name>pyridoxal 5'-phosphate</name>
        <dbReference type="ChEBI" id="CHEBI:597326"/>
    </cofactor>
</comment>
<comment type="pathway">
    <text>Cofactor biosynthesis; biotin biosynthesis.</text>
</comment>
<comment type="subunit">
    <text evidence="1">Homodimer.</text>
</comment>
<comment type="similarity">
    <text evidence="2">Belongs to the class-II pyridoxal-phosphate-dependent aminotransferase family. BioF subfamily.</text>
</comment>
<keyword id="KW-0093">Biotin biosynthesis</keyword>
<keyword id="KW-0663">Pyridoxal phosphate</keyword>
<keyword id="KW-0808">Transferase</keyword>
<evidence type="ECO:0000250" key="1"/>
<evidence type="ECO:0000305" key="2"/>
<sequence length="395" mass="44073">MNQPWRTHLQTKLQQLHEQGQYRNLHVTEQAEETWLIRDEKRMLNLASNNYLGLSGDERLKEAAIASTRKYGAGATASRLVVGNYSLYEEVERSICDWKGTEKALVVSSGYTANVGVISSLACRHDIVFSDKLNHASIVDGIILSGAEHKRYRHNDLNHLEALLKTASPEKRKLIVTDTVFSMDGDTAYLRELVQLKEKYGAIIIVDEAHASGIYGIGGAGLSHIEKDLAQKIDIHMGTFSKALGCYGAYLTGDAIYIEYLQNMMRSFIFTTALPPSTLGAVQKAIEIVQEDHKRRENLIANGEYFRSKLREAGFNIGNSSTHIVPIVVGSNENTLRFSKRLQEAGIAAIAIRPPTVPVHSSRIRFAVTSEHTIADLKWAIERITHIAKEEELFV</sequence>
<dbReference type="EC" id="2.3.1.47"/>
<dbReference type="EMBL" id="CP000001">
    <property type="protein sequence ID" value="AAU16394.1"/>
    <property type="molecule type" value="Genomic_DNA"/>
</dbReference>
<dbReference type="RefSeq" id="WP_001075627.1">
    <property type="nucleotide sequence ID" value="NC_006274.1"/>
</dbReference>
<dbReference type="SMR" id="Q635G4"/>
<dbReference type="KEGG" id="bcz:BCE33L3873"/>
<dbReference type="PATRIC" id="fig|288681.22.peg.1527"/>
<dbReference type="UniPathway" id="UPA00078"/>
<dbReference type="Proteomes" id="UP000002612">
    <property type="component" value="Chromosome"/>
</dbReference>
<dbReference type="GO" id="GO:0008710">
    <property type="term" value="F:8-amino-7-oxononanoate synthase activity"/>
    <property type="evidence" value="ECO:0007669"/>
    <property type="project" value="UniProtKB-EC"/>
</dbReference>
<dbReference type="GO" id="GO:0030170">
    <property type="term" value="F:pyridoxal phosphate binding"/>
    <property type="evidence" value="ECO:0007669"/>
    <property type="project" value="InterPro"/>
</dbReference>
<dbReference type="GO" id="GO:0009102">
    <property type="term" value="P:biotin biosynthetic process"/>
    <property type="evidence" value="ECO:0007669"/>
    <property type="project" value="UniProtKB-UniPathway"/>
</dbReference>
<dbReference type="CDD" id="cd06454">
    <property type="entry name" value="KBL_like"/>
    <property type="match status" value="1"/>
</dbReference>
<dbReference type="FunFam" id="3.40.640.10:FF:000006">
    <property type="entry name" value="5-aminolevulinate synthase, mitochondrial"/>
    <property type="match status" value="1"/>
</dbReference>
<dbReference type="Gene3D" id="3.90.1150.10">
    <property type="entry name" value="Aspartate Aminotransferase, domain 1"/>
    <property type="match status" value="1"/>
</dbReference>
<dbReference type="Gene3D" id="3.40.640.10">
    <property type="entry name" value="Type I PLP-dependent aspartate aminotransferase-like (Major domain)"/>
    <property type="match status" value="1"/>
</dbReference>
<dbReference type="InterPro" id="IPR001917">
    <property type="entry name" value="Aminotrans_II_pyridoxalP_BS"/>
</dbReference>
<dbReference type="InterPro" id="IPR004839">
    <property type="entry name" value="Aminotransferase_I/II_large"/>
</dbReference>
<dbReference type="InterPro" id="IPR050087">
    <property type="entry name" value="AON_synthase_class-II"/>
</dbReference>
<dbReference type="InterPro" id="IPR004723">
    <property type="entry name" value="AONS_Archaea/Proteobacteria"/>
</dbReference>
<dbReference type="InterPro" id="IPR015424">
    <property type="entry name" value="PyrdxlP-dep_Trfase"/>
</dbReference>
<dbReference type="InterPro" id="IPR015421">
    <property type="entry name" value="PyrdxlP-dep_Trfase_major"/>
</dbReference>
<dbReference type="InterPro" id="IPR015422">
    <property type="entry name" value="PyrdxlP-dep_Trfase_small"/>
</dbReference>
<dbReference type="NCBIfam" id="TIGR00858">
    <property type="entry name" value="bioF"/>
    <property type="match status" value="1"/>
</dbReference>
<dbReference type="PANTHER" id="PTHR13693:SF100">
    <property type="entry name" value="8-AMINO-7-OXONONANOATE SYNTHASE"/>
    <property type="match status" value="1"/>
</dbReference>
<dbReference type="PANTHER" id="PTHR13693">
    <property type="entry name" value="CLASS II AMINOTRANSFERASE/8-AMINO-7-OXONONANOATE SYNTHASE"/>
    <property type="match status" value="1"/>
</dbReference>
<dbReference type="Pfam" id="PF00155">
    <property type="entry name" value="Aminotran_1_2"/>
    <property type="match status" value="1"/>
</dbReference>
<dbReference type="SUPFAM" id="SSF53383">
    <property type="entry name" value="PLP-dependent transferases"/>
    <property type="match status" value="1"/>
</dbReference>
<dbReference type="PROSITE" id="PS00599">
    <property type="entry name" value="AA_TRANSFER_CLASS_2"/>
    <property type="match status" value="1"/>
</dbReference>